<reference key="1">
    <citation type="journal article" date="2002" name="Proc. Natl. Acad. Sci. U.S.A.">
        <title>Extensive mosaic structure revealed by the complete genome sequence of uropathogenic Escherichia coli.</title>
        <authorList>
            <person name="Welch R.A."/>
            <person name="Burland V."/>
            <person name="Plunkett G. III"/>
            <person name="Redford P."/>
            <person name="Roesch P."/>
            <person name="Rasko D."/>
            <person name="Buckles E.L."/>
            <person name="Liou S.-R."/>
            <person name="Boutin A."/>
            <person name="Hackett J."/>
            <person name="Stroud D."/>
            <person name="Mayhew G.F."/>
            <person name="Rose D.J."/>
            <person name="Zhou S."/>
            <person name="Schwartz D.C."/>
            <person name="Perna N.T."/>
            <person name="Mobley H.L.T."/>
            <person name="Donnenberg M.S."/>
            <person name="Blattner F.R."/>
        </authorList>
    </citation>
    <scope>NUCLEOTIDE SEQUENCE [LARGE SCALE GENOMIC DNA]</scope>
    <source>
        <strain>CFT073 / ATCC 700928 / UPEC</strain>
    </source>
</reference>
<organism>
    <name type="scientific">Escherichia coli O6:H1 (strain CFT073 / ATCC 700928 / UPEC)</name>
    <dbReference type="NCBI Taxonomy" id="199310"/>
    <lineage>
        <taxon>Bacteria</taxon>
        <taxon>Pseudomonadati</taxon>
        <taxon>Pseudomonadota</taxon>
        <taxon>Gammaproteobacteria</taxon>
        <taxon>Enterobacterales</taxon>
        <taxon>Enterobacteriaceae</taxon>
        <taxon>Escherichia</taxon>
    </lineage>
</organism>
<protein>
    <recommendedName>
        <fullName>Long-chain-fatty-acid--CoA ligase</fullName>
        <ecNumber evidence="2">6.2.1.3</ecNumber>
    </recommendedName>
    <alternativeName>
        <fullName>Long-chain acyl-CoA synthetase</fullName>
        <shortName>Acyl-CoA synthetase</shortName>
    </alternativeName>
</protein>
<sequence>MKKVWLNRYPADVPTEINPDRYQSLVDMFEQSVARYADQPAFVNMGEVMTFRKLEERSRAFAAYLQQGLGLKKGDRVALMMPNLLQYPVALFGILRAGMIVVNVNPLYTPRELEHQLNDSGASAIVIVSNFAHTLEKVVDKTAVQHVILTRMGDQLSTAKGTVVNFVVKYIKRLVPKYHLPDAISFRSALHNGYRMQYVKPELVPEDLAFLQYTGGTTGVAKGAMLTHRNMLANLEQVNATYGPLLHPGKELVVTALPLYHIFALTINCLLFIELGGQNLLITNPRDIPGLVKELAKYPFTAITGVNTLFNALLNNKEFQQLDFSSLHLSAGGGMPVQQVVAERWVKLTGQYLLEGYGLTECAPLVSVNPYDIDYHSGSIGLPVPSTEAKLVDDDDNEVPPGQPGELCVKGPQVMLGYWQRPDATDEIIKNGWLHTGDIAVMDEEGFLRIVDRKKDMILVSGFNVYPNEIEDVVMQHPGVQEVAAVGVPSGSSGEAVKIFVVKKDPSLTEESLVTFCRRQLTGYKVPKLVEFRDELPKSNVGKILRRELRDEARGKVDNKA</sequence>
<evidence type="ECO:0000250" key="1"/>
<evidence type="ECO:0000250" key="2">
    <source>
        <dbReference type="UniProtKB" id="P69451"/>
    </source>
</evidence>
<evidence type="ECO:0000305" key="3"/>
<proteinExistence type="inferred from homology"/>
<dbReference type="EC" id="6.2.1.3" evidence="2"/>
<dbReference type="EMBL" id="AE014075">
    <property type="protein sequence ID" value="AAN80668.1"/>
    <property type="status" value="ALT_INIT"/>
    <property type="molecule type" value="Genomic_DNA"/>
</dbReference>
<dbReference type="PIR" id="E64941">
    <property type="entry name" value="S41589"/>
</dbReference>
<dbReference type="RefSeq" id="WP_000758422.1">
    <property type="nucleotide sequence ID" value="NZ_CP051263.1"/>
</dbReference>
<dbReference type="SMR" id="P69452"/>
<dbReference type="STRING" id="199310.c2209"/>
<dbReference type="GeneID" id="75202631"/>
<dbReference type="KEGG" id="ecc:c2209"/>
<dbReference type="eggNOG" id="COG0318">
    <property type="taxonomic scope" value="Bacteria"/>
</dbReference>
<dbReference type="HOGENOM" id="CLU_000022_59_9_6"/>
<dbReference type="UniPathway" id="UPA00659"/>
<dbReference type="Proteomes" id="UP000001410">
    <property type="component" value="Chromosome"/>
</dbReference>
<dbReference type="GO" id="GO:0016020">
    <property type="term" value="C:membrane"/>
    <property type="evidence" value="ECO:0007669"/>
    <property type="project" value="UniProtKB-SubCell"/>
</dbReference>
<dbReference type="GO" id="GO:0005524">
    <property type="term" value="F:ATP binding"/>
    <property type="evidence" value="ECO:0007669"/>
    <property type="project" value="UniProtKB-KW"/>
</dbReference>
<dbReference type="GO" id="GO:0004467">
    <property type="term" value="F:long-chain fatty acid-CoA ligase activity"/>
    <property type="evidence" value="ECO:0007669"/>
    <property type="project" value="UniProtKB-EC"/>
</dbReference>
<dbReference type="GO" id="GO:0006635">
    <property type="term" value="P:fatty acid beta-oxidation"/>
    <property type="evidence" value="ECO:0007669"/>
    <property type="project" value="UniProtKB-UniPathway"/>
</dbReference>
<dbReference type="CDD" id="cd05936">
    <property type="entry name" value="FC-FACS_FadD_like"/>
    <property type="match status" value="1"/>
</dbReference>
<dbReference type="FunFam" id="3.30.300.30:FF:000006">
    <property type="entry name" value="Long-chain-fatty-acid--CoA ligase FadD"/>
    <property type="match status" value="1"/>
</dbReference>
<dbReference type="FunFam" id="3.40.50.12780:FF:000003">
    <property type="entry name" value="Long-chain-fatty-acid--CoA ligase FadD"/>
    <property type="match status" value="1"/>
</dbReference>
<dbReference type="Gene3D" id="3.30.300.30">
    <property type="match status" value="1"/>
</dbReference>
<dbReference type="Gene3D" id="3.40.50.12780">
    <property type="entry name" value="N-terminal domain of ligase-like"/>
    <property type="match status" value="1"/>
</dbReference>
<dbReference type="InterPro" id="IPR025110">
    <property type="entry name" value="AMP-bd_C"/>
</dbReference>
<dbReference type="InterPro" id="IPR045851">
    <property type="entry name" value="AMP-bd_C_sf"/>
</dbReference>
<dbReference type="InterPro" id="IPR020845">
    <property type="entry name" value="AMP-binding_CS"/>
</dbReference>
<dbReference type="InterPro" id="IPR000873">
    <property type="entry name" value="AMP-dep_synth/lig_dom"/>
</dbReference>
<dbReference type="InterPro" id="IPR042099">
    <property type="entry name" value="ANL_N_sf"/>
</dbReference>
<dbReference type="InterPro" id="IPR050237">
    <property type="entry name" value="ATP-dep_AMP-bd_enzyme"/>
</dbReference>
<dbReference type="NCBIfam" id="NF006523">
    <property type="entry name" value="PRK08974.1"/>
    <property type="match status" value="1"/>
</dbReference>
<dbReference type="PANTHER" id="PTHR43767">
    <property type="entry name" value="LONG-CHAIN-FATTY-ACID--COA LIGASE"/>
    <property type="match status" value="1"/>
</dbReference>
<dbReference type="PANTHER" id="PTHR43767:SF8">
    <property type="entry name" value="LONG-CHAIN-FATTY-ACID--COA LIGASE"/>
    <property type="match status" value="1"/>
</dbReference>
<dbReference type="Pfam" id="PF00501">
    <property type="entry name" value="AMP-binding"/>
    <property type="match status" value="1"/>
</dbReference>
<dbReference type="Pfam" id="PF13193">
    <property type="entry name" value="AMP-binding_C"/>
    <property type="match status" value="1"/>
</dbReference>
<dbReference type="SUPFAM" id="SSF56801">
    <property type="entry name" value="Acetyl-CoA synthetase-like"/>
    <property type="match status" value="1"/>
</dbReference>
<dbReference type="PROSITE" id="PS00455">
    <property type="entry name" value="AMP_BINDING"/>
    <property type="match status" value="1"/>
</dbReference>
<gene>
    <name type="primary">fadD</name>
    <name type="ordered locus">c2209</name>
</gene>
<comment type="function">
    <text evidence="2">Catalyzes the esterification, concomitant with transport, of exogenous long-chain fatty acids into metabolically active CoA thioesters for subsequent degradation or incorporation into phospholipids.</text>
</comment>
<comment type="catalytic activity">
    <reaction evidence="2">
        <text>a long-chain fatty acid + ATP + CoA = a long-chain fatty acyl-CoA + AMP + diphosphate</text>
        <dbReference type="Rhea" id="RHEA:15421"/>
        <dbReference type="ChEBI" id="CHEBI:30616"/>
        <dbReference type="ChEBI" id="CHEBI:33019"/>
        <dbReference type="ChEBI" id="CHEBI:57287"/>
        <dbReference type="ChEBI" id="CHEBI:57560"/>
        <dbReference type="ChEBI" id="CHEBI:83139"/>
        <dbReference type="ChEBI" id="CHEBI:456215"/>
        <dbReference type="EC" id="6.2.1.3"/>
    </reaction>
</comment>
<comment type="cofactor">
    <cofactor evidence="2">
        <name>Mg(2+)</name>
        <dbReference type="ChEBI" id="CHEBI:18420"/>
    </cofactor>
</comment>
<comment type="pathway">
    <text evidence="2">Lipid metabolism; fatty acid beta-oxidation.</text>
</comment>
<comment type="subcellular location">
    <subcellularLocation>
        <location evidence="1">Membrane</location>
        <topology evidence="1">Peripheral membrane protein</topology>
    </subcellularLocation>
    <text evidence="1">Partially membrane-associated.</text>
</comment>
<comment type="miscellaneous">
    <text evidence="2">Activity is the highest with fatty acid substrates of &gt; 10 carbon atoms.</text>
</comment>
<comment type="similarity">
    <text evidence="3">Belongs to the ATP-dependent AMP-binding enzyme family.</text>
</comment>
<comment type="sequence caution" evidence="3">
    <conflict type="erroneous initiation">
        <sequence resource="EMBL-CDS" id="AAN80668"/>
    </conflict>
</comment>
<name>LCFA_ECOL6</name>
<keyword id="KW-0067">ATP-binding</keyword>
<keyword id="KW-0276">Fatty acid metabolism</keyword>
<keyword id="KW-0436">Ligase</keyword>
<keyword id="KW-0443">Lipid metabolism</keyword>
<keyword id="KW-0460">Magnesium</keyword>
<keyword id="KW-0472">Membrane</keyword>
<keyword id="KW-0547">Nucleotide-binding</keyword>
<keyword id="KW-1185">Reference proteome</keyword>
<feature type="chain" id="PRO_0000193126" description="Long-chain-fatty-acid--CoA ligase">
    <location>
        <begin position="1"/>
        <end position="561"/>
    </location>
</feature>
<feature type="binding site" evidence="3">
    <location>
        <begin position="213"/>
        <end position="224"/>
    </location>
    <ligand>
        <name>ATP</name>
        <dbReference type="ChEBI" id="CHEBI:30616"/>
    </ligand>
</feature>
<accession>P69452</accession>
<accession>P29212</accession>